<gene>
    <name evidence="1" type="primary">rpsT</name>
    <name type="ordered locus">ERGA_CDS_00370</name>
</gene>
<name>RS20_EHRRG</name>
<protein>
    <recommendedName>
        <fullName evidence="1">Small ribosomal subunit protein bS20</fullName>
    </recommendedName>
    <alternativeName>
        <fullName evidence="2">30S ribosomal protein S20</fullName>
    </alternativeName>
</protein>
<reference key="1">
    <citation type="journal article" date="2006" name="J. Bacteriol.">
        <title>Comparative genomic analysis of three strains of Ehrlichia ruminantium reveals an active process of genome size plasticity.</title>
        <authorList>
            <person name="Frutos R."/>
            <person name="Viari A."/>
            <person name="Ferraz C."/>
            <person name="Morgat A."/>
            <person name="Eychenie S."/>
            <person name="Kandassamy Y."/>
            <person name="Chantal I."/>
            <person name="Bensaid A."/>
            <person name="Coissac E."/>
            <person name="Vachiery N."/>
            <person name="Demaille J."/>
            <person name="Martinez D."/>
        </authorList>
    </citation>
    <scope>NUCLEOTIDE SEQUENCE [LARGE SCALE GENOMIC DNA]</scope>
    <source>
        <strain>Gardel</strain>
    </source>
</reference>
<comment type="function">
    <text evidence="1">Binds directly to 16S ribosomal RNA.</text>
</comment>
<comment type="similarity">
    <text evidence="1">Belongs to the bacterial ribosomal protein bS20 family.</text>
</comment>
<dbReference type="EMBL" id="CR925677">
    <property type="protein sequence ID" value="CAI27489.1"/>
    <property type="molecule type" value="Genomic_DNA"/>
</dbReference>
<dbReference type="RefSeq" id="WP_011154731.1">
    <property type="nucleotide sequence ID" value="NC_006831.1"/>
</dbReference>
<dbReference type="SMR" id="Q5FF55"/>
<dbReference type="GeneID" id="33057921"/>
<dbReference type="KEGG" id="erg:ERGA_CDS_00370"/>
<dbReference type="HOGENOM" id="CLU_160655_3_0_5"/>
<dbReference type="OrthoDB" id="9807974at2"/>
<dbReference type="Proteomes" id="UP000000533">
    <property type="component" value="Chromosome"/>
</dbReference>
<dbReference type="GO" id="GO:0015935">
    <property type="term" value="C:small ribosomal subunit"/>
    <property type="evidence" value="ECO:0007669"/>
    <property type="project" value="TreeGrafter"/>
</dbReference>
<dbReference type="GO" id="GO:0070181">
    <property type="term" value="F:small ribosomal subunit rRNA binding"/>
    <property type="evidence" value="ECO:0007669"/>
    <property type="project" value="TreeGrafter"/>
</dbReference>
<dbReference type="GO" id="GO:0003735">
    <property type="term" value="F:structural constituent of ribosome"/>
    <property type="evidence" value="ECO:0007669"/>
    <property type="project" value="InterPro"/>
</dbReference>
<dbReference type="GO" id="GO:0006412">
    <property type="term" value="P:translation"/>
    <property type="evidence" value="ECO:0007669"/>
    <property type="project" value="UniProtKB-UniRule"/>
</dbReference>
<dbReference type="Gene3D" id="1.20.58.110">
    <property type="entry name" value="Ribosomal protein S20"/>
    <property type="match status" value="1"/>
</dbReference>
<dbReference type="HAMAP" id="MF_00500">
    <property type="entry name" value="Ribosomal_bS20"/>
    <property type="match status" value="1"/>
</dbReference>
<dbReference type="InterPro" id="IPR002583">
    <property type="entry name" value="Ribosomal_bS20"/>
</dbReference>
<dbReference type="InterPro" id="IPR036510">
    <property type="entry name" value="Ribosomal_bS20_sf"/>
</dbReference>
<dbReference type="NCBIfam" id="TIGR00029">
    <property type="entry name" value="S20"/>
    <property type="match status" value="1"/>
</dbReference>
<dbReference type="PANTHER" id="PTHR33398">
    <property type="entry name" value="30S RIBOSOMAL PROTEIN S20"/>
    <property type="match status" value="1"/>
</dbReference>
<dbReference type="PANTHER" id="PTHR33398:SF1">
    <property type="entry name" value="SMALL RIBOSOMAL SUBUNIT PROTEIN BS20C"/>
    <property type="match status" value="1"/>
</dbReference>
<dbReference type="Pfam" id="PF01649">
    <property type="entry name" value="Ribosomal_S20p"/>
    <property type="match status" value="1"/>
</dbReference>
<dbReference type="SUPFAM" id="SSF46992">
    <property type="entry name" value="Ribosomal protein S20"/>
    <property type="match status" value="1"/>
</dbReference>
<evidence type="ECO:0000255" key="1">
    <source>
        <dbReference type="HAMAP-Rule" id="MF_00500"/>
    </source>
</evidence>
<evidence type="ECO:0000305" key="2"/>
<keyword id="KW-0687">Ribonucleoprotein</keyword>
<keyword id="KW-0689">Ribosomal protein</keyword>
<keyword id="KW-0694">RNA-binding</keyword>
<keyword id="KW-0699">rRNA-binding</keyword>
<sequence>MANHPSAKKMIKVIKKRTMINRMRKSRAHNYIKKFMAALAAGNKELMLENFKKAESNLHRCVNKKIIHRNTAARKISRLALKLKTFDLQQQEKAS</sequence>
<feature type="chain" id="PRO_0000224967" description="Small ribosomal subunit protein bS20">
    <location>
        <begin position="1"/>
        <end position="95"/>
    </location>
</feature>
<proteinExistence type="inferred from homology"/>
<accession>Q5FF55</accession>
<organism>
    <name type="scientific">Ehrlichia ruminantium (strain Gardel)</name>
    <dbReference type="NCBI Taxonomy" id="302409"/>
    <lineage>
        <taxon>Bacteria</taxon>
        <taxon>Pseudomonadati</taxon>
        <taxon>Pseudomonadota</taxon>
        <taxon>Alphaproteobacteria</taxon>
        <taxon>Rickettsiales</taxon>
        <taxon>Anaplasmataceae</taxon>
        <taxon>Ehrlichia</taxon>
    </lineage>
</organism>